<reference key="1">
    <citation type="journal article" date="2004" name="Proc. Natl. Acad. Sci. U.S.A.">
        <title>Insights into the evolution of Yersinia pestis through whole-genome comparison with Yersinia pseudotuberculosis.</title>
        <authorList>
            <person name="Chain P.S.G."/>
            <person name="Carniel E."/>
            <person name="Larimer F.W."/>
            <person name="Lamerdin J."/>
            <person name="Stoutland P.O."/>
            <person name="Regala W.M."/>
            <person name="Georgescu A.M."/>
            <person name="Vergez L.M."/>
            <person name="Land M.L."/>
            <person name="Motin V.L."/>
            <person name="Brubaker R.R."/>
            <person name="Fowler J."/>
            <person name="Hinnebusch J."/>
            <person name="Marceau M."/>
            <person name="Medigue C."/>
            <person name="Simonet M."/>
            <person name="Chenal-Francisque V."/>
            <person name="Souza B."/>
            <person name="Dacheux D."/>
            <person name="Elliott J.M."/>
            <person name="Derbise A."/>
            <person name="Hauser L.J."/>
            <person name="Garcia E."/>
        </authorList>
    </citation>
    <scope>NUCLEOTIDE SEQUENCE [LARGE SCALE GENOMIC DNA]</scope>
    <source>
        <strain>IP32953</strain>
    </source>
</reference>
<keyword id="KW-0997">Cell inner membrane</keyword>
<keyword id="KW-1003">Cell membrane</keyword>
<keyword id="KW-0249">Electron transport</keyword>
<keyword id="KW-0285">Flavoprotein</keyword>
<keyword id="KW-0288">FMN</keyword>
<keyword id="KW-0349">Heme</keyword>
<keyword id="KW-0408">Iron</keyword>
<keyword id="KW-0472">Membrane</keyword>
<keyword id="KW-0479">Metal-binding</keyword>
<keyword id="KW-0812">Transmembrane</keyword>
<keyword id="KW-1133">Transmembrane helix</keyword>
<keyword id="KW-0813">Transport</keyword>
<feature type="chain" id="PRO_1000066198" description="Protein-methionine-sulfoxide reductase heme-binding subunit MsrQ">
    <location>
        <begin position="1"/>
        <end position="206"/>
    </location>
</feature>
<feature type="transmembrane region" description="Helical" evidence="1">
    <location>
        <begin position="13"/>
        <end position="33"/>
    </location>
</feature>
<feature type="transmembrane region" description="Helical" evidence="1">
    <location>
        <begin position="79"/>
        <end position="99"/>
    </location>
</feature>
<feature type="transmembrane region" description="Helical" evidence="1">
    <location>
        <begin position="116"/>
        <end position="136"/>
    </location>
</feature>
<feature type="transmembrane region" description="Helical" evidence="1">
    <location>
        <begin position="147"/>
        <end position="167"/>
    </location>
</feature>
<feature type="transmembrane region" description="Helical" evidence="1">
    <location>
        <begin position="169"/>
        <end position="189"/>
    </location>
</feature>
<comment type="function">
    <text evidence="1">Part of the MsrPQ system that repairs oxidized periplasmic proteins containing methionine sulfoxide residues (Met-O), using respiratory chain electrons. Thus protects these proteins from oxidative-stress damage caused by reactive species of oxygen and chlorine generated by the host defense mechanisms. MsrPQ is essential for the maintenance of envelope integrity under bleach stress, rescuing a wide series of structurally unrelated periplasmic proteins from methionine oxidation. MsrQ provides electrons for reduction to the reductase catalytic subunit MsrP, using the quinone pool of the respiratory chain.</text>
</comment>
<comment type="cofactor">
    <cofactor evidence="1">
        <name>FMN</name>
        <dbReference type="ChEBI" id="CHEBI:58210"/>
    </cofactor>
    <text evidence="1">Binds 1 FMN per subunit.</text>
</comment>
<comment type="cofactor">
    <cofactor evidence="1">
        <name>heme b</name>
        <dbReference type="ChEBI" id="CHEBI:60344"/>
    </cofactor>
    <text evidence="1">Binds 1 heme b (iron(II)-protoporphyrin IX) group per subunit.</text>
</comment>
<comment type="subunit">
    <text evidence="1">Heterodimer of a catalytic subunit (MsrP) and a heme-binding subunit (MsrQ).</text>
</comment>
<comment type="subcellular location">
    <subcellularLocation>
        <location evidence="1">Cell inner membrane</location>
        <topology evidence="1">Multi-pass membrane protein</topology>
    </subcellularLocation>
</comment>
<comment type="similarity">
    <text evidence="1">Belongs to the MsrQ family.</text>
</comment>
<proteinExistence type="inferred from homology"/>
<protein>
    <recommendedName>
        <fullName evidence="1">Protein-methionine-sulfoxide reductase heme-binding subunit MsrQ</fullName>
    </recommendedName>
    <alternativeName>
        <fullName evidence="1">Flavocytochrome MsrQ</fullName>
    </alternativeName>
</protein>
<accession>Q665E9</accession>
<name>MSRQ_YERPS</name>
<dbReference type="EMBL" id="BX936398">
    <property type="protein sequence ID" value="CAH22807.1"/>
    <property type="molecule type" value="Genomic_DNA"/>
</dbReference>
<dbReference type="RefSeq" id="WP_002210072.1">
    <property type="nucleotide sequence ID" value="NZ_CP009712.1"/>
</dbReference>
<dbReference type="SMR" id="Q665E9"/>
<dbReference type="GeneID" id="57975086"/>
<dbReference type="KEGG" id="ypo:BZ17_3032"/>
<dbReference type="KEGG" id="yps:YPTB3569"/>
<dbReference type="PATRIC" id="fig|273123.14.peg.3177"/>
<dbReference type="Proteomes" id="UP000001011">
    <property type="component" value="Chromosome"/>
</dbReference>
<dbReference type="GO" id="GO:0005886">
    <property type="term" value="C:plasma membrane"/>
    <property type="evidence" value="ECO:0007669"/>
    <property type="project" value="UniProtKB-SubCell"/>
</dbReference>
<dbReference type="GO" id="GO:0009055">
    <property type="term" value="F:electron transfer activity"/>
    <property type="evidence" value="ECO:0007669"/>
    <property type="project" value="UniProtKB-UniRule"/>
</dbReference>
<dbReference type="GO" id="GO:0010181">
    <property type="term" value="F:FMN binding"/>
    <property type="evidence" value="ECO:0007669"/>
    <property type="project" value="UniProtKB-UniRule"/>
</dbReference>
<dbReference type="GO" id="GO:0020037">
    <property type="term" value="F:heme binding"/>
    <property type="evidence" value="ECO:0007669"/>
    <property type="project" value="UniProtKB-UniRule"/>
</dbReference>
<dbReference type="GO" id="GO:0046872">
    <property type="term" value="F:metal ion binding"/>
    <property type="evidence" value="ECO:0007669"/>
    <property type="project" value="UniProtKB-KW"/>
</dbReference>
<dbReference type="GO" id="GO:0016679">
    <property type="term" value="F:oxidoreductase activity, acting on diphenols and related substances as donors"/>
    <property type="evidence" value="ECO:0007669"/>
    <property type="project" value="TreeGrafter"/>
</dbReference>
<dbReference type="GO" id="GO:0030091">
    <property type="term" value="P:protein repair"/>
    <property type="evidence" value="ECO:0007669"/>
    <property type="project" value="UniProtKB-UniRule"/>
</dbReference>
<dbReference type="HAMAP" id="MF_01207">
    <property type="entry name" value="MsrQ"/>
    <property type="match status" value="1"/>
</dbReference>
<dbReference type="InterPro" id="IPR013130">
    <property type="entry name" value="Fe3_Rdtase_TM_dom"/>
</dbReference>
<dbReference type="InterPro" id="IPR022837">
    <property type="entry name" value="MsrQ-like"/>
</dbReference>
<dbReference type="NCBIfam" id="NF003832">
    <property type="entry name" value="PRK05419.1-4"/>
    <property type="match status" value="1"/>
</dbReference>
<dbReference type="PANTHER" id="PTHR36964">
    <property type="entry name" value="PROTEIN-METHIONINE-SULFOXIDE REDUCTASE HEME-BINDING SUBUNIT MSRQ"/>
    <property type="match status" value="1"/>
</dbReference>
<dbReference type="PANTHER" id="PTHR36964:SF1">
    <property type="entry name" value="PROTEIN-METHIONINE-SULFOXIDE REDUCTASE HEME-BINDING SUBUNIT MSRQ"/>
    <property type="match status" value="1"/>
</dbReference>
<dbReference type="Pfam" id="PF01794">
    <property type="entry name" value="Ferric_reduct"/>
    <property type="match status" value="1"/>
</dbReference>
<organism>
    <name type="scientific">Yersinia pseudotuberculosis serotype I (strain IP32953)</name>
    <dbReference type="NCBI Taxonomy" id="273123"/>
    <lineage>
        <taxon>Bacteria</taxon>
        <taxon>Pseudomonadati</taxon>
        <taxon>Pseudomonadota</taxon>
        <taxon>Gammaproteobacteria</taxon>
        <taxon>Enterobacterales</taxon>
        <taxon>Yersiniaceae</taxon>
        <taxon>Yersinia</taxon>
    </lineage>
</organism>
<sequence>MRLSLRHITWLKIAIWLAATLPLLWLVLSINLGGLSADPAKDIQHFTGRMALKLLLATLLVSPLARYSKQPLLLRCRRLLGLWCFAWGTLHLLSYSILELGLSNIGLLGHELINRPYLTLGIISWLVLLALALTSTRWAQRKMGARWQKLHNWVYVVAILAPIHYLWSVKTLSPWPIIYAVMAALLLLLRYKLLLPRYKKFRQWFR</sequence>
<evidence type="ECO:0000255" key="1">
    <source>
        <dbReference type="HAMAP-Rule" id="MF_01207"/>
    </source>
</evidence>
<gene>
    <name evidence="1" type="primary">msrQ</name>
    <name type="ordered locus">YPTB3569</name>
</gene>